<dbReference type="EC" id="2.8.1.1" evidence="1"/>
<dbReference type="EMBL" id="CP000653">
    <property type="protein sequence ID" value="ABP62489.1"/>
    <property type="molecule type" value="Genomic_DNA"/>
</dbReference>
<dbReference type="RefSeq" id="WP_015960794.1">
    <property type="nucleotide sequence ID" value="NC_009436.1"/>
</dbReference>
<dbReference type="SMR" id="A4WFK9"/>
<dbReference type="STRING" id="399742.Ent638_3834"/>
<dbReference type="KEGG" id="ent:Ent638_3834"/>
<dbReference type="eggNOG" id="COG0607">
    <property type="taxonomic scope" value="Bacteria"/>
</dbReference>
<dbReference type="HOGENOM" id="CLU_089574_14_0_6"/>
<dbReference type="OrthoDB" id="9811849at2"/>
<dbReference type="Proteomes" id="UP000000230">
    <property type="component" value="Chromosome"/>
</dbReference>
<dbReference type="GO" id="GO:0005737">
    <property type="term" value="C:cytoplasm"/>
    <property type="evidence" value="ECO:0007669"/>
    <property type="project" value="UniProtKB-SubCell"/>
</dbReference>
<dbReference type="GO" id="GO:0004792">
    <property type="term" value="F:thiosulfate-cyanide sulfurtransferase activity"/>
    <property type="evidence" value="ECO:0007669"/>
    <property type="project" value="UniProtKB-UniRule"/>
</dbReference>
<dbReference type="GO" id="GO:0006071">
    <property type="term" value="P:glycerol metabolic process"/>
    <property type="evidence" value="ECO:0007669"/>
    <property type="project" value="UniProtKB-UniRule"/>
</dbReference>
<dbReference type="CDD" id="cd01444">
    <property type="entry name" value="GlpE_ST"/>
    <property type="match status" value="1"/>
</dbReference>
<dbReference type="FunFam" id="3.40.250.10:FF:000007">
    <property type="entry name" value="Thiosulfate sulfurtransferase GlpE"/>
    <property type="match status" value="1"/>
</dbReference>
<dbReference type="Gene3D" id="3.40.250.10">
    <property type="entry name" value="Rhodanese-like domain"/>
    <property type="match status" value="1"/>
</dbReference>
<dbReference type="HAMAP" id="MF_01009">
    <property type="entry name" value="Thiosulf_sulfurtr"/>
    <property type="match status" value="1"/>
</dbReference>
<dbReference type="InterPro" id="IPR050229">
    <property type="entry name" value="GlpE_sulfurtransferase"/>
</dbReference>
<dbReference type="InterPro" id="IPR001763">
    <property type="entry name" value="Rhodanese-like_dom"/>
</dbReference>
<dbReference type="InterPro" id="IPR036873">
    <property type="entry name" value="Rhodanese-like_dom_sf"/>
</dbReference>
<dbReference type="InterPro" id="IPR023695">
    <property type="entry name" value="Thiosulf_sulfurTrfase"/>
</dbReference>
<dbReference type="NCBIfam" id="NF001195">
    <property type="entry name" value="PRK00162.1"/>
    <property type="match status" value="1"/>
</dbReference>
<dbReference type="PANTHER" id="PTHR43031">
    <property type="entry name" value="FAD-DEPENDENT OXIDOREDUCTASE"/>
    <property type="match status" value="1"/>
</dbReference>
<dbReference type="PANTHER" id="PTHR43031:SF6">
    <property type="entry name" value="THIOSULFATE SULFURTRANSFERASE GLPE"/>
    <property type="match status" value="1"/>
</dbReference>
<dbReference type="Pfam" id="PF00581">
    <property type="entry name" value="Rhodanese"/>
    <property type="match status" value="1"/>
</dbReference>
<dbReference type="SMART" id="SM00450">
    <property type="entry name" value="RHOD"/>
    <property type="match status" value="1"/>
</dbReference>
<dbReference type="SUPFAM" id="SSF52821">
    <property type="entry name" value="Rhodanese/Cell cycle control phosphatase"/>
    <property type="match status" value="1"/>
</dbReference>
<dbReference type="PROSITE" id="PS50206">
    <property type="entry name" value="RHODANESE_3"/>
    <property type="match status" value="1"/>
</dbReference>
<protein>
    <recommendedName>
        <fullName evidence="1">Thiosulfate sulfurtransferase GlpE</fullName>
        <ecNumber evidence="1">2.8.1.1</ecNumber>
    </recommendedName>
</protein>
<organism>
    <name type="scientific">Enterobacter sp. (strain 638)</name>
    <dbReference type="NCBI Taxonomy" id="399742"/>
    <lineage>
        <taxon>Bacteria</taxon>
        <taxon>Pseudomonadati</taxon>
        <taxon>Pseudomonadota</taxon>
        <taxon>Gammaproteobacteria</taxon>
        <taxon>Enterobacterales</taxon>
        <taxon>Enterobacteriaceae</taxon>
        <taxon>Enterobacter</taxon>
    </lineage>
</organism>
<name>GLPE_ENT38</name>
<evidence type="ECO:0000255" key="1">
    <source>
        <dbReference type="HAMAP-Rule" id="MF_01009"/>
    </source>
</evidence>
<sequence length="110" mass="12324">MDQFECINVEEAHQKMHQGKAVLVDIRDPQSYAMGHTPGAFHLTNDTLGTFMRDNDFETPVMVMCYHGNSSKGAAQYLLQQGYDAVYSVDGGFDAWHRHFPAEVEHAFGG</sequence>
<feature type="chain" id="PRO_1000062960" description="Thiosulfate sulfurtransferase GlpE">
    <location>
        <begin position="1"/>
        <end position="110"/>
    </location>
</feature>
<feature type="domain" description="Rhodanese" evidence="1">
    <location>
        <begin position="17"/>
        <end position="105"/>
    </location>
</feature>
<feature type="active site" description="Cysteine persulfide intermediate" evidence="1">
    <location>
        <position position="65"/>
    </location>
</feature>
<proteinExistence type="inferred from homology"/>
<accession>A4WFK9</accession>
<comment type="function">
    <text evidence="1">Transferase that catalyzes the transfer of sulfur from thiosulfate to thiophilic acceptors such as cyanide or dithiols. May function in a CysM-independent thiosulfate assimilation pathway by catalyzing the conversion of thiosulfate to sulfite, which can then be used for L-cysteine biosynthesis.</text>
</comment>
<comment type="catalytic activity">
    <reaction evidence="1">
        <text>thiosulfate + hydrogen cyanide = thiocyanate + sulfite + 2 H(+)</text>
        <dbReference type="Rhea" id="RHEA:16881"/>
        <dbReference type="ChEBI" id="CHEBI:15378"/>
        <dbReference type="ChEBI" id="CHEBI:17359"/>
        <dbReference type="ChEBI" id="CHEBI:18022"/>
        <dbReference type="ChEBI" id="CHEBI:18407"/>
        <dbReference type="ChEBI" id="CHEBI:33542"/>
        <dbReference type="EC" id="2.8.1.1"/>
    </reaction>
</comment>
<comment type="catalytic activity">
    <reaction evidence="1">
        <text>thiosulfate + [thioredoxin]-dithiol = [thioredoxin]-disulfide + hydrogen sulfide + sulfite + 2 H(+)</text>
        <dbReference type="Rhea" id="RHEA:83859"/>
        <dbReference type="Rhea" id="RHEA-COMP:10698"/>
        <dbReference type="Rhea" id="RHEA-COMP:10700"/>
        <dbReference type="ChEBI" id="CHEBI:15378"/>
        <dbReference type="ChEBI" id="CHEBI:17359"/>
        <dbReference type="ChEBI" id="CHEBI:29919"/>
        <dbReference type="ChEBI" id="CHEBI:29950"/>
        <dbReference type="ChEBI" id="CHEBI:33542"/>
        <dbReference type="ChEBI" id="CHEBI:50058"/>
    </reaction>
</comment>
<comment type="subcellular location">
    <subcellularLocation>
        <location evidence="1">Cytoplasm</location>
    </subcellularLocation>
</comment>
<comment type="similarity">
    <text evidence="1">Belongs to the GlpE family.</text>
</comment>
<reference key="1">
    <citation type="journal article" date="2010" name="PLoS Genet.">
        <title>Genome sequence of the plant growth promoting endophytic bacterium Enterobacter sp. 638.</title>
        <authorList>
            <person name="Taghavi S."/>
            <person name="van der Lelie D."/>
            <person name="Hoffman A."/>
            <person name="Zhang Y.B."/>
            <person name="Walla M.D."/>
            <person name="Vangronsveld J."/>
            <person name="Newman L."/>
            <person name="Monchy S."/>
        </authorList>
    </citation>
    <scope>NUCLEOTIDE SEQUENCE [LARGE SCALE GENOMIC DNA]</scope>
    <source>
        <strain>638</strain>
    </source>
</reference>
<gene>
    <name evidence="1" type="primary">glpE</name>
    <name type="ordered locus">Ent638_3834</name>
</gene>
<keyword id="KW-0963">Cytoplasm</keyword>
<keyword id="KW-0808">Transferase</keyword>